<name>CSD_HALH5</name>
<feature type="chain" id="PRO_0000150292" description="Probable cysteine desulfurase">
    <location>
        <begin position="1"/>
        <end position="406"/>
    </location>
</feature>
<feature type="active site" description="Cysteine persulfide intermediate" evidence="1">
    <location>
        <position position="361"/>
    </location>
</feature>
<feature type="modified residue" description="N6-(pyridoxal phosphate)lysine" evidence="1">
    <location>
        <position position="224"/>
    </location>
</feature>
<dbReference type="EC" id="2.8.1.7"/>
<dbReference type="EMBL" id="BA000004">
    <property type="protein sequence ID" value="BAB07188.1"/>
    <property type="status" value="ALT_FRAME"/>
    <property type="molecule type" value="Genomic_DNA"/>
</dbReference>
<dbReference type="PIR" id="E84083">
    <property type="entry name" value="E84083"/>
</dbReference>
<dbReference type="SMR" id="Q9K7A0"/>
<dbReference type="STRING" id="272558.gene:10729382"/>
<dbReference type="KEGG" id="bha:BH3469"/>
<dbReference type="eggNOG" id="COG0520">
    <property type="taxonomic scope" value="Bacteria"/>
</dbReference>
<dbReference type="HOGENOM" id="CLU_003433_5_2_9"/>
<dbReference type="Proteomes" id="UP000001258">
    <property type="component" value="Chromosome"/>
</dbReference>
<dbReference type="GO" id="GO:0031071">
    <property type="term" value="F:cysteine desulfurase activity"/>
    <property type="evidence" value="ECO:0007669"/>
    <property type="project" value="UniProtKB-EC"/>
</dbReference>
<dbReference type="GO" id="GO:0030170">
    <property type="term" value="F:pyridoxal phosphate binding"/>
    <property type="evidence" value="ECO:0007669"/>
    <property type="project" value="InterPro"/>
</dbReference>
<dbReference type="GO" id="GO:0006534">
    <property type="term" value="P:cysteine metabolic process"/>
    <property type="evidence" value="ECO:0007669"/>
    <property type="project" value="InterPro"/>
</dbReference>
<dbReference type="CDD" id="cd06453">
    <property type="entry name" value="SufS_like"/>
    <property type="match status" value="1"/>
</dbReference>
<dbReference type="Gene3D" id="3.90.1150.10">
    <property type="entry name" value="Aspartate Aminotransferase, domain 1"/>
    <property type="match status" value="1"/>
</dbReference>
<dbReference type="Gene3D" id="3.40.640.10">
    <property type="entry name" value="Type I PLP-dependent aspartate aminotransferase-like (Major domain)"/>
    <property type="match status" value="1"/>
</dbReference>
<dbReference type="InterPro" id="IPR000192">
    <property type="entry name" value="Aminotrans_V_dom"/>
</dbReference>
<dbReference type="InterPro" id="IPR020578">
    <property type="entry name" value="Aminotrans_V_PyrdxlP_BS"/>
</dbReference>
<dbReference type="InterPro" id="IPR010970">
    <property type="entry name" value="Cys_dSase_SufS"/>
</dbReference>
<dbReference type="InterPro" id="IPR016454">
    <property type="entry name" value="Cysteine_dSase"/>
</dbReference>
<dbReference type="InterPro" id="IPR015424">
    <property type="entry name" value="PyrdxlP-dep_Trfase"/>
</dbReference>
<dbReference type="InterPro" id="IPR015421">
    <property type="entry name" value="PyrdxlP-dep_Trfase_major"/>
</dbReference>
<dbReference type="InterPro" id="IPR015422">
    <property type="entry name" value="PyrdxlP-dep_Trfase_small"/>
</dbReference>
<dbReference type="NCBIfam" id="TIGR01979">
    <property type="entry name" value="sufS"/>
    <property type="match status" value="1"/>
</dbReference>
<dbReference type="PANTHER" id="PTHR43586">
    <property type="entry name" value="CYSTEINE DESULFURASE"/>
    <property type="match status" value="1"/>
</dbReference>
<dbReference type="PANTHER" id="PTHR43586:SF8">
    <property type="entry name" value="CYSTEINE DESULFURASE 1, CHLOROPLASTIC"/>
    <property type="match status" value="1"/>
</dbReference>
<dbReference type="Pfam" id="PF00266">
    <property type="entry name" value="Aminotran_5"/>
    <property type="match status" value="1"/>
</dbReference>
<dbReference type="PIRSF" id="PIRSF005572">
    <property type="entry name" value="NifS"/>
    <property type="match status" value="1"/>
</dbReference>
<dbReference type="SUPFAM" id="SSF53383">
    <property type="entry name" value="PLP-dependent transferases"/>
    <property type="match status" value="1"/>
</dbReference>
<dbReference type="PROSITE" id="PS00595">
    <property type="entry name" value="AA_TRANSFER_CLASS_5"/>
    <property type="match status" value="1"/>
</dbReference>
<comment type="function">
    <text evidence="1">Catalyzes the removal of elemental sulfur and selenium atoms from L-cysteine, L-cystine, L-selenocysteine, and L-selenocystine to produce L-alanine.</text>
</comment>
<comment type="catalytic activity">
    <reaction>
        <text>(sulfur carrier)-H + L-cysteine = (sulfur carrier)-SH + L-alanine</text>
        <dbReference type="Rhea" id="RHEA:43892"/>
        <dbReference type="Rhea" id="RHEA-COMP:14737"/>
        <dbReference type="Rhea" id="RHEA-COMP:14739"/>
        <dbReference type="ChEBI" id="CHEBI:29917"/>
        <dbReference type="ChEBI" id="CHEBI:35235"/>
        <dbReference type="ChEBI" id="CHEBI:57972"/>
        <dbReference type="ChEBI" id="CHEBI:64428"/>
        <dbReference type="EC" id="2.8.1.7"/>
    </reaction>
</comment>
<comment type="cofactor">
    <cofactor evidence="1">
        <name>pyridoxal 5'-phosphate</name>
        <dbReference type="ChEBI" id="CHEBI:597326"/>
    </cofactor>
</comment>
<comment type="similarity">
    <text evidence="2">Belongs to the class-V pyridoxal-phosphate-dependent aminotransferase family. Csd subfamily.</text>
</comment>
<comment type="sequence caution" evidence="2">
    <conflict type="frameshift">
        <sequence resource="EMBL-CDS" id="BAB07188"/>
    </conflict>
</comment>
<organism>
    <name type="scientific">Halalkalibacterium halodurans (strain ATCC BAA-125 / DSM 18197 / FERM 7344 / JCM 9153 / C-125)</name>
    <name type="common">Bacillus halodurans</name>
    <dbReference type="NCBI Taxonomy" id="272558"/>
    <lineage>
        <taxon>Bacteria</taxon>
        <taxon>Bacillati</taxon>
        <taxon>Bacillota</taxon>
        <taxon>Bacilli</taxon>
        <taxon>Bacillales</taxon>
        <taxon>Bacillaceae</taxon>
        <taxon>Halalkalibacterium (ex Joshi et al. 2022)</taxon>
    </lineage>
</organism>
<sequence>MNAHEIKKLFPVLDQEVNGSPLVYLDSAATSQKPIAVIEALDDYYRRYNSNVHRGVHTLGTLATDGYEGAREKIRRFIHASSTEEIIFTRGTTTAINLVAASYGRANLGEGDEIVITPMEHHSNIIPWQQVAKATGATLTYLPLQKDGTIKIEDVEKTISEKTKIVAIMHVSNVLGTINPVKEIAEIAHRHGAIMLVDGAQSAPHMKIDVQELGCDFFAFSGHKMAGPTGIGVLYGKKAHLEKMEPVEFGGEMIDFVGLYDSTWKELPWKFEGGTPIIAGAIGLGAAIDFLEDIGLDEIEKHEHELAQYALDRLSELEGMTVYGPQKRAGLVTFNIEDVHPHDVATVLDADGIAVRAGHHCAQPLMKWLDVTATARASFYLYNTKEDIDALAKGLEKTKEYFGHVF</sequence>
<gene>
    <name type="primary">csd</name>
    <name type="ordered locus">BH3469</name>
</gene>
<evidence type="ECO:0000250" key="1"/>
<evidence type="ECO:0000305" key="2"/>
<reference key="1">
    <citation type="journal article" date="2000" name="Nucleic Acids Res.">
        <title>Complete genome sequence of the alkaliphilic bacterium Bacillus halodurans and genomic sequence comparison with Bacillus subtilis.</title>
        <authorList>
            <person name="Takami H."/>
            <person name="Nakasone K."/>
            <person name="Takaki Y."/>
            <person name="Maeno G."/>
            <person name="Sasaki R."/>
            <person name="Masui N."/>
            <person name="Fuji F."/>
            <person name="Hirama C."/>
            <person name="Nakamura Y."/>
            <person name="Ogasawara N."/>
            <person name="Kuhara S."/>
            <person name="Horikoshi K."/>
        </authorList>
    </citation>
    <scope>NUCLEOTIDE SEQUENCE [LARGE SCALE GENOMIC DNA]</scope>
    <source>
        <strain>ATCC BAA-125 / DSM 18197 / FERM 7344 / JCM 9153 / C-125</strain>
    </source>
</reference>
<keyword id="KW-0663">Pyridoxal phosphate</keyword>
<keyword id="KW-1185">Reference proteome</keyword>
<keyword id="KW-0808">Transferase</keyword>
<proteinExistence type="inferred from homology"/>
<protein>
    <recommendedName>
        <fullName>Probable cysteine desulfurase</fullName>
        <ecNumber>2.8.1.7</ecNumber>
    </recommendedName>
</protein>
<accession>Q9K7A0</accession>